<comment type="function">
    <text evidence="2 3">Transaldolase is important for the balance of metabolites in the pentose-phosphate pathway.</text>
</comment>
<comment type="catalytic activity">
    <reaction evidence="2 3">
        <text>D-sedoheptulose 7-phosphate + D-glyceraldehyde 3-phosphate = D-erythrose 4-phosphate + beta-D-fructose 6-phosphate</text>
        <dbReference type="Rhea" id="RHEA:17053"/>
        <dbReference type="ChEBI" id="CHEBI:16897"/>
        <dbReference type="ChEBI" id="CHEBI:57483"/>
        <dbReference type="ChEBI" id="CHEBI:57634"/>
        <dbReference type="ChEBI" id="CHEBI:59776"/>
        <dbReference type="EC" id="2.2.1.2"/>
    </reaction>
</comment>
<comment type="activity regulation">
    <text evidence="3">Inhibited by Tris-HCl and phosphate buffer. Also competitively inhibited by sugars with L configuration at C2, such as D-arabinose-5-phosphate and L-glyceraldehyde.</text>
</comment>
<comment type="biophysicochemical properties">
    <kinetics>
        <KM evidence="3">38 uM for D,L-glyceraldehyde 3-phosphate (with C3 acceptor compounds at pH 8.5 and 30 degrees Celsius)</KM>
        <KM evidence="3">90 uM for D-erythrose-4-phosphate (with C3 acceptor compounds at pH 8.5 and 30 degrees Celsius)</KM>
        <KM evidence="3">31 mM for D-ribose-5-phosphate (with C3 acceptor compounds at pH 8.5 and 30 degrees Celsius)</KM>
        <KM evidence="3">28 mM for D-glyceraldehyde (with C3 acceptor compounds at pH 8.5 and 30 degrees Celsius)</KM>
        <KM evidence="3">285 uM for D-sedoheptulose-7-phosphate (with C3 donor compounds at pH 8.5 and 30 degrees Celsius)</KM>
        <KM evidence="3">1200 uM for D-fructose-6-phosphate (with C3 donor compounds at pH 8.5 and 30 degrees Celsius)</KM>
        <KM evidence="2">3 mM for D-fructose-6-phosphate</KM>
        <Vmax evidence="2">85.0 umol/min/mg enzyme</Vmax>
        <text evidence="2">kcat is 53 sec(-1) for D-fructose-6-phosphate.</text>
    </kinetics>
    <phDependence>
        <text evidence="3">Optimum pH is between 8.5 and 9.5.</text>
    </phDependence>
    <temperatureDependence>
        <text evidence="3">Optimum temperature is between 15 and 40 degrees Celsius. At temperatures above 50 degrees Celsius, activity is lost rapidly, and at 55 degrees Celsius, the enzyme is totally inactivated.</text>
    </temperatureDependence>
</comment>
<comment type="pathway">
    <text>Carbohydrate degradation; pentose phosphate pathway; D-glyceraldehyde 3-phosphate and beta-D-fructose 6-phosphate from D-ribose 5-phosphate and D-xylulose 5-phosphate (non-oxidative stage): step 2/3.</text>
</comment>
<comment type="subunit">
    <text evidence="2 3 4">Homodimer.</text>
</comment>
<comment type="subcellular location">
    <subcellularLocation>
        <location evidence="7">Cytoplasm</location>
    </subcellularLocation>
</comment>
<comment type="miscellaneous">
    <text evidence="2">Mutagenesis of Phe-178 to Tyr increases its preference for fructose-6-phosphate over 70-fold.</text>
</comment>
<comment type="similarity">
    <text evidence="7">Belongs to the transaldolase family. Type 1 subfamily.</text>
</comment>
<comment type="online information" name="Wikipedia">
    <link uri="https://en.wikipedia.org/wiki/Transaldolase_B"/>
    <text>Transaldolase B entry</text>
</comment>
<reference key="1">
    <citation type="journal article" date="1995" name="J. Bacteriol.">
        <title>Transaldolase B of Escherichia coli K-12: cloning of its gene, talB, and characterization of the enzyme from recombinant strains.</title>
        <authorList>
            <person name="Sprenger G.A."/>
            <person name="Schorken U."/>
            <person name="Sprenger G."/>
            <person name="Sahm H."/>
        </authorList>
    </citation>
    <scope>NUCLEOTIDE SEQUENCE [GENOMIC DNA]</scope>
    <scope>PROTEIN SEQUENCE OF 2-11</scope>
    <scope>FUNCTION</scope>
    <scope>CATALYTIC ACTIVITY</scope>
    <scope>BIOPHYSICOCHEMICAL PROPERTIES</scope>
    <scope>ACTIVITY REGULATION</scope>
    <scope>SUBUNIT</scope>
</reference>
<reference key="2">
    <citation type="submission" date="1997-08" db="EMBL/GenBank/DDBJ databases">
        <authorList>
            <person name="Iida A."/>
            <person name="Teshiba S."/>
            <person name="Mizobuchi K."/>
        </authorList>
    </citation>
    <scope>NUCLEOTIDE SEQUENCE [GENOMIC DNA]</scope>
    <source>
        <strain>K12 / W3110 / ATCC 27325 / DSM 5911</strain>
    </source>
</reference>
<reference key="3">
    <citation type="journal article" date="1992" name="Nucleic Acids Res.">
        <title>Systematic sequencing of the Escherichia coli genome: analysis of the 0-2.4 min region.</title>
        <authorList>
            <person name="Yura T."/>
            <person name="Mori H."/>
            <person name="Nagai H."/>
            <person name="Nagata T."/>
            <person name="Ishihama A."/>
            <person name="Fujita N."/>
            <person name="Isono K."/>
            <person name="Mizobuchi K."/>
            <person name="Nakata A."/>
        </authorList>
    </citation>
    <scope>NUCLEOTIDE SEQUENCE [LARGE SCALE GENOMIC DNA]</scope>
    <source>
        <strain>K12</strain>
    </source>
</reference>
<reference key="4">
    <citation type="journal article" date="1997" name="Science">
        <title>The complete genome sequence of Escherichia coli K-12.</title>
        <authorList>
            <person name="Blattner F.R."/>
            <person name="Plunkett G. III"/>
            <person name="Bloch C.A."/>
            <person name="Perna N.T."/>
            <person name="Burland V."/>
            <person name="Riley M."/>
            <person name="Collado-Vides J."/>
            <person name="Glasner J.D."/>
            <person name="Rode C.K."/>
            <person name="Mayhew G.F."/>
            <person name="Gregor J."/>
            <person name="Davis N.W."/>
            <person name="Kirkpatrick H.A."/>
            <person name="Goeden M.A."/>
            <person name="Rose D.J."/>
            <person name="Mau B."/>
            <person name="Shao Y."/>
        </authorList>
    </citation>
    <scope>NUCLEOTIDE SEQUENCE [LARGE SCALE GENOMIC DNA]</scope>
    <source>
        <strain>K12 / MG1655 / ATCC 47076</strain>
    </source>
</reference>
<reference key="5">
    <citation type="journal article" date="2006" name="Mol. Syst. Biol.">
        <title>Highly accurate genome sequences of Escherichia coli K-12 strains MG1655 and W3110.</title>
        <authorList>
            <person name="Hayashi K."/>
            <person name="Morooka N."/>
            <person name="Yamamoto Y."/>
            <person name="Fujita K."/>
            <person name="Isono K."/>
            <person name="Choi S."/>
            <person name="Ohtsubo E."/>
            <person name="Baba T."/>
            <person name="Wanner B.L."/>
            <person name="Mori H."/>
            <person name="Horiuchi T."/>
        </authorList>
    </citation>
    <scope>NUCLEOTIDE SEQUENCE [LARGE SCALE GENOMIC DNA]</scope>
    <source>
        <strain>K12 / W3110 / ATCC 27325 / DSM 5911</strain>
    </source>
</reference>
<reference key="6">
    <citation type="submission" date="1994-09" db="UniProtKB">
        <authorList>
            <person name="Pasquali C."/>
            <person name="Sanchez J.-C."/>
            <person name="Ravier F."/>
            <person name="Golaz O."/>
            <person name="Hughes G.J."/>
            <person name="Frutiger S."/>
            <person name="Paquet N."/>
            <person name="Wilkins M."/>
            <person name="Appel R.D."/>
            <person name="Bairoch A."/>
            <person name="Hochstrasser D.F."/>
        </authorList>
    </citation>
    <scope>PROTEIN SEQUENCE OF 2-12</scope>
    <source>
        <strain>K12 / W3110 / ATCC 27325 / DSM 5911</strain>
    </source>
</reference>
<reference key="7">
    <citation type="journal article" date="1997" name="Electrophoresis">
        <title>Comparing the predicted and observed properties of proteins encoded in the genome of Escherichia coli K-12.</title>
        <authorList>
            <person name="Link A.J."/>
            <person name="Robison K."/>
            <person name="Church G.M."/>
        </authorList>
    </citation>
    <scope>PROTEIN SEQUENCE OF 2-13</scope>
    <source>
        <strain>K12 / EMG2</strain>
    </source>
</reference>
<reference key="8">
    <citation type="unpublished observations" date="1993-06">
        <authorList>
            <person name="Sprenger G.A."/>
        </authorList>
    </citation>
    <scope>PRESENCE OF TWO TRANSALDOLASES IN E.COLI</scope>
</reference>
<reference evidence="13" key="9">
    <citation type="journal article" date="1996" name="Structure">
        <title>Crystal structure of transaldolase B from Escherichia coli suggests a circular permutation of the alpha/beta barrel within the class I aldolase family.</title>
        <authorList>
            <person name="Jia J."/>
            <person name="Huang W."/>
            <person name="Schoerken U."/>
            <person name="Sham H."/>
            <person name="Sprenger G.A."/>
            <person name="Lindqvist Y."/>
            <person name="Schneider G."/>
        </authorList>
    </citation>
    <scope>X-RAY CRYSTALLOGRAPHY (1.87 ANGSTROMS)</scope>
    <scope>SUBUNIT</scope>
</reference>
<reference evidence="14" key="10">
    <citation type="journal article" date="1997" name="Protein Sci.">
        <title>Crystal structure of the reduced Schiff-base intermediate complex of transaldolase B from Escherichia coli: mechanistic implications for class I aldolases.</title>
        <authorList>
            <person name="Jia J."/>
            <person name="Schorken U."/>
            <person name="Lindqvist Y."/>
            <person name="Sprenger G.A."/>
            <person name="Schneider G."/>
        </authorList>
    </citation>
    <scope>X-RAY CRYSTALLOGRAPHY (2.2 ANGSTROMS)</scope>
</reference>
<reference evidence="8 9 10 11 12" key="11">
    <citation type="journal article" date="2001" name="Eur. J. Biochem.">
        <title>Identification of catalytically important residues in the active site of Escherichia coli transaldolase.</title>
        <authorList>
            <person name="Schorken U."/>
            <person name="Thorell S."/>
            <person name="Schurmann M."/>
            <person name="Jia J."/>
            <person name="Sprenger G.A."/>
            <person name="Schneider G."/>
        </authorList>
    </citation>
    <scope>X-RAY CRYSTALLOGRAPHY (2.05 ANGSTROMS)</scope>
    <scope>ACTIVE SITE</scope>
    <source>
        <strain>K12 / W3110 / ATCC 27325 / DSM 5911</strain>
    </source>
</reference>
<reference evidence="15" key="12">
    <citation type="journal article" date="2008" name="J. Biol. Chem.">
        <title>Replacement of a phenylalanine by a tyrosine in the active site confers fructose-6-phosphate aldolase activity to the transaldolase of Escherichia coli and human origin.</title>
        <authorList>
            <person name="Schneider S."/>
            <person name="Sandalova T."/>
            <person name="Schneider G."/>
            <person name="Sprenger G.A."/>
            <person name="Samland A.K."/>
        </authorList>
    </citation>
    <scope>X-RAY CRYSTALLOGRAPHY (1.4 ANGSTROMS) OF 2-316 OF MUTANT TYR-178</scope>
    <scope>FUNCTION</scope>
    <scope>BIOPHYSICOCHEMICAL PROPERTIES</scope>
    <scope>SUBUNIT</scope>
    <scope>MUTAGENESIS OF PHE-178</scope>
    <source>
        <strain>K12 / W3110 / ATCC 27325 / DSM 5911</strain>
    </source>
</reference>
<reference evidence="16" key="13">
    <citation type="journal article" date="2010" name="ChemBioChem">
        <title>Redesigning the active site of transaldolase TalB from Escherichia coli: new variants with improved affinity towards nonphosphorylated substrates.</title>
        <authorList>
            <person name="Schneider S."/>
            <person name="Gutierrez M."/>
            <person name="Sandalova T."/>
            <person name="Schneider G."/>
            <person name="Clapes P."/>
            <person name="Sprenger G.A."/>
            <person name="Samland A.K."/>
        </authorList>
    </citation>
    <scope>X-RAY CRYSTALLOGRAPHY (1.9 ANGSTROMS)</scope>
</reference>
<dbReference type="EC" id="2.2.1.2" evidence="3"/>
<dbReference type="EMBL" id="D13161">
    <property type="protein sequence ID" value="BAA21822.1"/>
    <property type="molecule type" value="Genomic_DNA"/>
</dbReference>
<dbReference type="EMBL" id="S80045">
    <property type="protein sequence ID" value="AAB47022.1"/>
    <property type="molecule type" value="Genomic_DNA"/>
</dbReference>
<dbReference type="EMBL" id="U00096">
    <property type="protein sequence ID" value="AAC73119.1"/>
    <property type="molecule type" value="Genomic_DNA"/>
</dbReference>
<dbReference type="EMBL" id="AP009048">
    <property type="protein sequence ID" value="BAB96586.1"/>
    <property type="molecule type" value="Genomic_DNA"/>
</dbReference>
<dbReference type="PIR" id="S40535">
    <property type="entry name" value="S40535"/>
</dbReference>
<dbReference type="RefSeq" id="NP_414549.1">
    <property type="nucleotide sequence ID" value="NC_000913.3"/>
</dbReference>
<dbReference type="PDB" id="1I2N">
    <property type="method" value="X-ray"/>
    <property type="resolution" value="2.05 A"/>
    <property type="chains" value="A/B=2-317"/>
</dbReference>
<dbReference type="PDB" id="1I2O">
    <property type="method" value="X-ray"/>
    <property type="resolution" value="2.05 A"/>
    <property type="chains" value="A/B=2-317"/>
</dbReference>
<dbReference type="PDB" id="1I2P">
    <property type="method" value="X-ray"/>
    <property type="resolution" value="2.05 A"/>
    <property type="chains" value="A/B=2-317"/>
</dbReference>
<dbReference type="PDB" id="1I2Q">
    <property type="method" value="X-ray"/>
    <property type="resolution" value="2.05 A"/>
    <property type="chains" value="A/B=2-317"/>
</dbReference>
<dbReference type="PDB" id="1I2R">
    <property type="method" value="X-ray"/>
    <property type="resolution" value="2.10 A"/>
    <property type="chains" value="A/B=2-317"/>
</dbReference>
<dbReference type="PDB" id="1ONR">
    <property type="method" value="X-ray"/>
    <property type="resolution" value="1.87 A"/>
    <property type="chains" value="A/B=2-317"/>
</dbReference>
<dbReference type="PDB" id="1UCW">
    <property type="method" value="X-ray"/>
    <property type="resolution" value="2.20 A"/>
    <property type="chains" value="A/B=1-317"/>
</dbReference>
<dbReference type="PDB" id="3CWN">
    <property type="method" value="X-ray"/>
    <property type="resolution" value="1.40 A"/>
    <property type="chains" value="A/B=1-317"/>
</dbReference>
<dbReference type="PDB" id="3KOF">
    <property type="method" value="X-ray"/>
    <property type="resolution" value="1.90 A"/>
    <property type="chains" value="A/B=1-317"/>
</dbReference>
<dbReference type="PDB" id="4RZ5">
    <property type="method" value="X-ray"/>
    <property type="resolution" value="1.80 A"/>
    <property type="chains" value="A/B=1-317"/>
</dbReference>
<dbReference type="PDB" id="4RZ6">
    <property type="method" value="X-ray"/>
    <property type="resolution" value="1.80 A"/>
    <property type="chains" value="A/B=1-317"/>
</dbReference>
<dbReference type="PDB" id="4S2B">
    <property type="method" value="X-ray"/>
    <property type="resolution" value="1.46 A"/>
    <property type="chains" value="A/B=1-317"/>
</dbReference>
<dbReference type="PDB" id="4S2C">
    <property type="method" value="X-ray"/>
    <property type="resolution" value="2.20 A"/>
    <property type="chains" value="A/B=1-317"/>
</dbReference>
<dbReference type="PDBsum" id="1I2N"/>
<dbReference type="PDBsum" id="1I2O"/>
<dbReference type="PDBsum" id="1I2P"/>
<dbReference type="PDBsum" id="1I2Q"/>
<dbReference type="PDBsum" id="1I2R"/>
<dbReference type="PDBsum" id="1ONR"/>
<dbReference type="PDBsum" id="1UCW"/>
<dbReference type="PDBsum" id="3CWN"/>
<dbReference type="PDBsum" id="3KOF"/>
<dbReference type="PDBsum" id="4RZ5"/>
<dbReference type="PDBsum" id="4RZ6"/>
<dbReference type="PDBsum" id="4S2B"/>
<dbReference type="PDBsum" id="4S2C"/>
<dbReference type="SMR" id="P0A870"/>
<dbReference type="BioGRID" id="4261939">
    <property type="interactions" value="12"/>
</dbReference>
<dbReference type="BioGRID" id="849151">
    <property type="interactions" value="1"/>
</dbReference>
<dbReference type="DIP" id="DIP-31850N"/>
<dbReference type="FunCoup" id="P0A870">
    <property type="interactions" value="834"/>
</dbReference>
<dbReference type="IntAct" id="P0A870">
    <property type="interactions" value="9"/>
</dbReference>
<dbReference type="STRING" id="511145.b0008"/>
<dbReference type="jPOST" id="P0A870"/>
<dbReference type="PaxDb" id="511145-b0008"/>
<dbReference type="EnsemblBacteria" id="AAC73119">
    <property type="protein sequence ID" value="AAC73119"/>
    <property type="gene ID" value="b0008"/>
</dbReference>
<dbReference type="GeneID" id="944748"/>
<dbReference type="KEGG" id="ecj:JW0007"/>
<dbReference type="KEGG" id="eco:b0008"/>
<dbReference type="KEGG" id="ecoc:C3026_00045"/>
<dbReference type="PATRIC" id="fig|1411691.4.peg.2275"/>
<dbReference type="EchoBASE" id="EB1517"/>
<dbReference type="eggNOG" id="COG0176">
    <property type="taxonomic scope" value="Bacteria"/>
</dbReference>
<dbReference type="HOGENOM" id="CLU_047470_0_1_6"/>
<dbReference type="InParanoid" id="P0A870"/>
<dbReference type="OMA" id="THAEFLW"/>
<dbReference type="OrthoDB" id="9809101at2"/>
<dbReference type="PhylomeDB" id="P0A870"/>
<dbReference type="BioCyc" id="EcoCyc:TRANSALDOLB-MONOMER"/>
<dbReference type="BioCyc" id="MetaCyc:TRANSALDOLB-MONOMER"/>
<dbReference type="BRENDA" id="2.2.1.2">
    <property type="organism ID" value="2026"/>
</dbReference>
<dbReference type="UniPathway" id="UPA00115">
    <property type="reaction ID" value="UER00414"/>
</dbReference>
<dbReference type="EvolutionaryTrace" id="P0A870"/>
<dbReference type="PRO" id="PR:P0A870"/>
<dbReference type="Proteomes" id="UP000000625">
    <property type="component" value="Chromosome"/>
</dbReference>
<dbReference type="GO" id="GO:0005829">
    <property type="term" value="C:cytosol"/>
    <property type="evidence" value="ECO:0000314"/>
    <property type="project" value="EcoCyc"/>
</dbReference>
<dbReference type="GO" id="GO:0016020">
    <property type="term" value="C:membrane"/>
    <property type="evidence" value="ECO:0007005"/>
    <property type="project" value="UniProtKB"/>
</dbReference>
<dbReference type="GO" id="GO:0004801">
    <property type="term" value="F:transaldolase activity"/>
    <property type="evidence" value="ECO:0000314"/>
    <property type="project" value="UniProtKB"/>
</dbReference>
<dbReference type="GO" id="GO:0016744">
    <property type="term" value="F:transketolase or transaldolase activity"/>
    <property type="evidence" value="ECO:0000314"/>
    <property type="project" value="EcoCyc"/>
</dbReference>
<dbReference type="GO" id="GO:0005975">
    <property type="term" value="P:carbohydrate metabolic process"/>
    <property type="evidence" value="ECO:0007669"/>
    <property type="project" value="InterPro"/>
</dbReference>
<dbReference type="GO" id="GO:0009052">
    <property type="term" value="P:pentose-phosphate shunt, non-oxidative branch"/>
    <property type="evidence" value="ECO:0000314"/>
    <property type="project" value="EcoCyc"/>
</dbReference>
<dbReference type="CDD" id="cd00957">
    <property type="entry name" value="Transaldolase_TalAB"/>
    <property type="match status" value="1"/>
</dbReference>
<dbReference type="FunFam" id="3.20.20.70:FF:000002">
    <property type="entry name" value="Transaldolase"/>
    <property type="match status" value="1"/>
</dbReference>
<dbReference type="Gene3D" id="3.20.20.70">
    <property type="entry name" value="Aldolase class I"/>
    <property type="match status" value="1"/>
</dbReference>
<dbReference type="HAMAP" id="MF_00492">
    <property type="entry name" value="Transaldolase_1"/>
    <property type="match status" value="1"/>
</dbReference>
<dbReference type="InterPro" id="IPR013785">
    <property type="entry name" value="Aldolase_TIM"/>
</dbReference>
<dbReference type="InterPro" id="IPR001585">
    <property type="entry name" value="TAL/FSA"/>
</dbReference>
<dbReference type="InterPro" id="IPR004730">
    <property type="entry name" value="Transaldolase_1"/>
</dbReference>
<dbReference type="InterPro" id="IPR018225">
    <property type="entry name" value="Transaldolase_AS"/>
</dbReference>
<dbReference type="NCBIfam" id="NF009001">
    <property type="entry name" value="PRK12346.1"/>
    <property type="match status" value="1"/>
</dbReference>
<dbReference type="NCBIfam" id="TIGR00874">
    <property type="entry name" value="talAB"/>
    <property type="match status" value="1"/>
</dbReference>
<dbReference type="PANTHER" id="PTHR10683">
    <property type="entry name" value="TRANSALDOLASE"/>
    <property type="match status" value="1"/>
</dbReference>
<dbReference type="PANTHER" id="PTHR10683:SF18">
    <property type="entry name" value="TRANSALDOLASE"/>
    <property type="match status" value="1"/>
</dbReference>
<dbReference type="Pfam" id="PF00923">
    <property type="entry name" value="TAL_FSA"/>
    <property type="match status" value="1"/>
</dbReference>
<dbReference type="SUPFAM" id="SSF51569">
    <property type="entry name" value="Aldolase"/>
    <property type="match status" value="1"/>
</dbReference>
<dbReference type="PROSITE" id="PS01054">
    <property type="entry name" value="TRANSALDOLASE_1"/>
    <property type="match status" value="1"/>
</dbReference>
<dbReference type="PROSITE" id="PS00958">
    <property type="entry name" value="TRANSALDOLASE_2"/>
    <property type="match status" value="1"/>
</dbReference>
<evidence type="ECO:0000269" key="1">
    <source>
    </source>
</evidence>
<evidence type="ECO:0000269" key="2">
    <source>
    </source>
</evidence>
<evidence type="ECO:0000269" key="3">
    <source>
    </source>
</evidence>
<evidence type="ECO:0000269" key="4">
    <source>
    </source>
</evidence>
<evidence type="ECO:0000269" key="5">
    <source>
    </source>
</evidence>
<evidence type="ECO:0000269" key="6">
    <source ref="6"/>
</evidence>
<evidence type="ECO:0000305" key="7"/>
<evidence type="ECO:0007744" key="8">
    <source>
        <dbReference type="PDB" id="1I2N"/>
    </source>
</evidence>
<evidence type="ECO:0007744" key="9">
    <source>
        <dbReference type="PDB" id="1I2O"/>
    </source>
</evidence>
<evidence type="ECO:0007744" key="10">
    <source>
        <dbReference type="PDB" id="1I2P"/>
    </source>
</evidence>
<evidence type="ECO:0007744" key="11">
    <source>
        <dbReference type="PDB" id="1I2Q"/>
    </source>
</evidence>
<evidence type="ECO:0007744" key="12">
    <source>
        <dbReference type="PDB" id="1I2R"/>
    </source>
</evidence>
<evidence type="ECO:0007744" key="13">
    <source>
        <dbReference type="PDB" id="1ONR"/>
    </source>
</evidence>
<evidence type="ECO:0007744" key="14">
    <source>
        <dbReference type="PDB" id="1UCW"/>
    </source>
</evidence>
<evidence type="ECO:0007744" key="15">
    <source>
        <dbReference type="PDB" id="3CWN"/>
    </source>
</evidence>
<evidence type="ECO:0007744" key="16">
    <source>
        <dbReference type="PDB" id="3KOF"/>
    </source>
</evidence>
<evidence type="ECO:0007829" key="17">
    <source>
        <dbReference type="PDB" id="3CWN"/>
    </source>
</evidence>
<name>TALB_ECOLI</name>
<keyword id="KW-0002">3D-structure</keyword>
<keyword id="KW-0963">Cytoplasm</keyword>
<keyword id="KW-0903">Direct protein sequencing</keyword>
<keyword id="KW-0570">Pentose shunt</keyword>
<keyword id="KW-1185">Reference proteome</keyword>
<keyword id="KW-0704">Schiff base</keyword>
<keyword id="KW-0808">Transferase</keyword>
<proteinExistence type="evidence at protein level"/>
<sequence>MTDKLTSLRQYTTVVADTGDIAAMKLYQPQDATTNPSLILNAAQIPEYRKLIDDAVAWAKQQSNDRAQQIVDATDKLAVNIGLEILKLVPGRISTEVDARLSYDTEASIAKAKRLIKLYNDAGISNDRILIKLASTWQGIRAAEQLEKEGINCNLTLLFSFAQARACAEAGVFLISPFVGRILDWYKANTDKKEYAPAEDPGVVSVSEIYQYYKEHGYETVVMGASFRNIGEILELAGCDRLTIAPALLKELAESEGAIERKLSYTGEVKARPARITESEFLWQHNQDPMAVDKLAEGIRKFAIDQEKLEKMIGDLL</sequence>
<accession>P0A870</accession>
<accession>P30148</accession>
<feature type="initiator methionine" description="Removed" evidence="3 5 6">
    <location>
        <position position="1"/>
    </location>
</feature>
<feature type="chain" id="PRO_0000173593" description="Transaldolase B">
    <location>
        <begin position="2"/>
        <end position="317"/>
    </location>
</feature>
<feature type="active site" description="Schiff-base intermediate with substrate" evidence="1">
    <location>
        <position position="132"/>
    </location>
</feature>
<feature type="mutagenesis site" description="Critical for gain of fructose-6-phosphate aldolase activity." evidence="2">
    <original>F</original>
    <variation>Y</variation>
    <location>
        <position position="178"/>
    </location>
</feature>
<feature type="helix" evidence="17">
    <location>
        <begin position="4"/>
        <end position="8"/>
    </location>
</feature>
<feature type="turn" evidence="17">
    <location>
        <begin position="9"/>
        <end position="11"/>
    </location>
</feature>
<feature type="strand" evidence="17">
    <location>
        <begin position="12"/>
        <end position="17"/>
    </location>
</feature>
<feature type="helix" evidence="17">
    <location>
        <begin position="21"/>
        <end position="27"/>
    </location>
</feature>
<feature type="strand" evidence="17">
    <location>
        <begin position="30"/>
        <end position="33"/>
    </location>
</feature>
<feature type="helix" evidence="17">
    <location>
        <begin position="36"/>
        <end position="43"/>
    </location>
</feature>
<feature type="helix" evidence="17">
    <location>
        <begin position="46"/>
        <end position="48"/>
    </location>
</feature>
<feature type="helix" evidence="17">
    <location>
        <begin position="49"/>
        <end position="62"/>
    </location>
</feature>
<feature type="helix" evidence="17">
    <location>
        <begin position="66"/>
        <end position="86"/>
    </location>
</feature>
<feature type="strand" evidence="17">
    <location>
        <begin position="93"/>
        <end position="96"/>
    </location>
</feature>
<feature type="helix" evidence="17">
    <location>
        <begin position="99"/>
        <end position="101"/>
    </location>
</feature>
<feature type="helix" evidence="17">
    <location>
        <begin position="105"/>
        <end position="121"/>
    </location>
</feature>
<feature type="helix" evidence="17">
    <location>
        <begin position="126"/>
        <end position="128"/>
    </location>
</feature>
<feature type="strand" evidence="17">
    <location>
        <begin position="129"/>
        <end position="134"/>
    </location>
</feature>
<feature type="helix" evidence="17">
    <location>
        <begin position="137"/>
        <end position="148"/>
    </location>
</feature>
<feature type="strand" evidence="17">
    <location>
        <begin position="153"/>
        <end position="158"/>
    </location>
</feature>
<feature type="helix" evidence="17">
    <location>
        <begin position="161"/>
        <end position="169"/>
    </location>
</feature>
<feature type="strand" evidence="17">
    <location>
        <begin position="173"/>
        <end position="179"/>
    </location>
</feature>
<feature type="helix" evidence="17">
    <location>
        <begin position="180"/>
        <end position="189"/>
    </location>
</feature>
<feature type="helix" evidence="17">
    <location>
        <begin position="197"/>
        <end position="199"/>
    </location>
</feature>
<feature type="helix" evidence="17">
    <location>
        <begin position="201"/>
        <end position="215"/>
    </location>
</feature>
<feature type="strand" evidence="17">
    <location>
        <begin position="221"/>
        <end position="225"/>
    </location>
</feature>
<feature type="helix" evidence="17">
    <location>
        <begin position="230"/>
        <end position="235"/>
    </location>
</feature>
<feature type="turn" evidence="17">
    <location>
        <begin position="236"/>
        <end position="238"/>
    </location>
</feature>
<feature type="strand" evidence="17">
    <location>
        <begin position="239"/>
        <end position="244"/>
    </location>
</feature>
<feature type="helix" evidence="17">
    <location>
        <begin position="246"/>
        <end position="254"/>
    </location>
</feature>
<feature type="strand" evidence="17">
    <location>
        <begin position="255"/>
        <end position="257"/>
    </location>
</feature>
<feature type="helix" evidence="17">
    <location>
        <begin position="278"/>
        <end position="286"/>
    </location>
</feature>
<feature type="helix" evidence="17">
    <location>
        <begin position="289"/>
        <end position="314"/>
    </location>
</feature>
<organism>
    <name type="scientific">Escherichia coli (strain K12)</name>
    <dbReference type="NCBI Taxonomy" id="83333"/>
    <lineage>
        <taxon>Bacteria</taxon>
        <taxon>Pseudomonadati</taxon>
        <taxon>Pseudomonadota</taxon>
        <taxon>Gammaproteobacteria</taxon>
        <taxon>Enterobacterales</taxon>
        <taxon>Enterobacteriaceae</taxon>
        <taxon>Escherichia</taxon>
    </lineage>
</organism>
<gene>
    <name type="primary">talB</name>
    <name type="synonym">yaaK</name>
    <name type="ordered locus">b0008</name>
    <name type="ordered locus">JW0007</name>
</gene>
<protein>
    <recommendedName>
        <fullName>Transaldolase B</fullName>
        <ecNumber evidence="3">2.2.1.2</ecNumber>
    </recommendedName>
</protein>